<protein>
    <recommendedName>
        <fullName>Paired box protein Pax-6</fullName>
    </recommendedName>
</protein>
<sequence length="216" mass="24469">QMRLQLKRKLQRNRTSFTQEQIEALEKEFERTHYPDVFARERLAAKIDLPEARIQVWFSNRRAKWRREEKLRNQRRQASNTPSHIPISSSFSTSVYQPIPQPTTPGSMLGRTDTALTNTYSALPPMPSFTMANNLPMQPPVPSQTSSYSCMLPTSPSVNGRSYDTYTPPHMQTHMNSQPMGTSGTTSTGLISPGVSVPVQVPGSEPDMSQYWPRLQ</sequence>
<comment type="function">
    <text>May be a transcription factor with important functions in eye and nasal development.</text>
</comment>
<comment type="subunit">
    <text evidence="3">Interacts with MAF.</text>
</comment>
<comment type="subcellular location">
    <subcellularLocation>
        <location>Nucleus</location>
    </subcellularLocation>
</comment>
<comment type="similarity">
    <text evidence="4">Belongs to the paired homeobox family.</text>
</comment>
<feature type="chain" id="PRO_0000050188" description="Paired box protein Pax-6">
    <location>
        <begin position="1" status="less than"/>
        <end position="216"/>
    </location>
</feature>
<feature type="DNA-binding region" description="Homeobox" evidence="1">
    <location>
        <begin position="10"/>
        <end position="69"/>
    </location>
</feature>
<feature type="region of interest" description="Disordered" evidence="2">
    <location>
        <begin position="68"/>
        <end position="109"/>
    </location>
</feature>
<feature type="compositionally biased region" description="Low complexity" evidence="2">
    <location>
        <begin position="81"/>
        <end position="94"/>
    </location>
</feature>
<feature type="non-terminal residue">
    <location>
        <position position="1"/>
    </location>
</feature>
<organism>
    <name type="scientific">Gallus gallus</name>
    <name type="common">Chicken</name>
    <dbReference type="NCBI Taxonomy" id="9031"/>
    <lineage>
        <taxon>Eukaryota</taxon>
        <taxon>Metazoa</taxon>
        <taxon>Chordata</taxon>
        <taxon>Craniata</taxon>
        <taxon>Vertebrata</taxon>
        <taxon>Euteleostomi</taxon>
        <taxon>Archelosauria</taxon>
        <taxon>Archosauria</taxon>
        <taxon>Dinosauria</taxon>
        <taxon>Saurischia</taxon>
        <taxon>Theropoda</taxon>
        <taxon>Coelurosauria</taxon>
        <taxon>Aves</taxon>
        <taxon>Neognathae</taxon>
        <taxon>Galloanserae</taxon>
        <taxon>Galliformes</taxon>
        <taxon>Phasianidae</taxon>
        <taxon>Phasianinae</taxon>
        <taxon>Gallus</taxon>
    </lineage>
</organism>
<gene>
    <name type="primary">PAX6</name>
</gene>
<proteinExistence type="evidence at protein level"/>
<evidence type="ECO:0000255" key="1">
    <source>
        <dbReference type="PROSITE-ProRule" id="PRU00108"/>
    </source>
</evidence>
<evidence type="ECO:0000256" key="2">
    <source>
        <dbReference type="SAM" id="MobiDB-lite"/>
    </source>
</evidence>
<evidence type="ECO:0000269" key="3">
    <source>
    </source>
</evidence>
<evidence type="ECO:0000305" key="4"/>
<accession>P47237</accession>
<keyword id="KW-0217">Developmental protein</keyword>
<keyword id="KW-0238">DNA-binding</keyword>
<keyword id="KW-0371">Homeobox</keyword>
<keyword id="KW-0539">Nucleus</keyword>
<keyword id="KW-1185">Reference proteome</keyword>
<keyword id="KW-0804">Transcription</keyword>
<keyword id="KW-0805">Transcription regulation</keyword>
<dbReference type="EMBL" id="S69508">
    <property type="protein sequence ID" value="AAB30163.1"/>
    <property type="molecule type" value="mRNA"/>
</dbReference>
<dbReference type="PIR" id="I51234">
    <property type="entry name" value="I51234"/>
</dbReference>
<dbReference type="BMRB" id="P47237"/>
<dbReference type="SMR" id="P47237"/>
<dbReference type="FunCoup" id="P47237">
    <property type="interactions" value="430"/>
</dbReference>
<dbReference type="STRING" id="9031.ENSGALP00000070449"/>
<dbReference type="PaxDb" id="9031-ENSGALP00000019778"/>
<dbReference type="VEuPathDB" id="HostDB:geneid_395943"/>
<dbReference type="eggNOG" id="KOG0849">
    <property type="taxonomic scope" value="Eukaryota"/>
</dbReference>
<dbReference type="HOGENOM" id="CLU_019281_1_0_1"/>
<dbReference type="InParanoid" id="P47237"/>
<dbReference type="OrthoDB" id="3225452at2759"/>
<dbReference type="Proteomes" id="UP000000539">
    <property type="component" value="Unassembled WGS sequence"/>
</dbReference>
<dbReference type="GO" id="GO:0005634">
    <property type="term" value="C:nucleus"/>
    <property type="evidence" value="ECO:0007669"/>
    <property type="project" value="UniProtKB-SubCell"/>
</dbReference>
<dbReference type="GO" id="GO:0003677">
    <property type="term" value="F:DNA binding"/>
    <property type="evidence" value="ECO:0007669"/>
    <property type="project" value="UniProtKB-KW"/>
</dbReference>
<dbReference type="GO" id="GO:0000981">
    <property type="term" value="F:DNA-binding transcription factor activity, RNA polymerase II-specific"/>
    <property type="evidence" value="ECO:0007669"/>
    <property type="project" value="InterPro"/>
</dbReference>
<dbReference type="CDD" id="cd00086">
    <property type="entry name" value="homeodomain"/>
    <property type="match status" value="1"/>
</dbReference>
<dbReference type="FunFam" id="1.10.10.60:FF:000516">
    <property type="entry name" value="Transcription factor Toy"/>
    <property type="match status" value="1"/>
</dbReference>
<dbReference type="Gene3D" id="1.10.10.60">
    <property type="entry name" value="Homeodomain-like"/>
    <property type="match status" value="1"/>
</dbReference>
<dbReference type="InterPro" id="IPR001356">
    <property type="entry name" value="HD"/>
</dbReference>
<dbReference type="InterPro" id="IPR017970">
    <property type="entry name" value="Homeobox_CS"/>
</dbReference>
<dbReference type="InterPro" id="IPR009057">
    <property type="entry name" value="Homeodomain-like_sf"/>
</dbReference>
<dbReference type="InterPro" id="IPR043565">
    <property type="entry name" value="PAX_fam"/>
</dbReference>
<dbReference type="PANTHER" id="PTHR45636:SF41">
    <property type="entry name" value="PAIRED BOX PROTEIN PAX-6-RELATED"/>
    <property type="match status" value="1"/>
</dbReference>
<dbReference type="PANTHER" id="PTHR45636">
    <property type="entry name" value="PAIRED BOX PROTEIN PAX-6-RELATED-RELATED"/>
    <property type="match status" value="1"/>
</dbReference>
<dbReference type="Pfam" id="PF00046">
    <property type="entry name" value="Homeodomain"/>
    <property type="match status" value="1"/>
</dbReference>
<dbReference type="SMART" id="SM00389">
    <property type="entry name" value="HOX"/>
    <property type="match status" value="1"/>
</dbReference>
<dbReference type="SUPFAM" id="SSF46689">
    <property type="entry name" value="Homeodomain-like"/>
    <property type="match status" value="1"/>
</dbReference>
<dbReference type="PROSITE" id="PS00027">
    <property type="entry name" value="HOMEOBOX_1"/>
    <property type="match status" value="1"/>
</dbReference>
<dbReference type="PROSITE" id="PS50071">
    <property type="entry name" value="HOMEOBOX_2"/>
    <property type="match status" value="1"/>
</dbReference>
<reference key="1">
    <citation type="journal article" date="1994" name="Dev. Biol.">
        <title>Pax-6 is first expressed in a region of ectoderm anterior to the early neural plate: implications for stepwise determination of the lens.</title>
        <authorList>
            <person name="Li H.S."/>
            <person name="Yang J.M."/>
            <person name="Jacobson R.D."/>
            <person name="Pasko D."/>
            <person name="Sundin O."/>
        </authorList>
    </citation>
    <scope>NUCLEOTIDE SEQUENCE [MRNA]</scope>
</reference>
<reference key="2">
    <citation type="journal article" date="2001" name="J. Biol. Chem.">
        <title>A set of Hox proteins interact with the Maf oncoprotein to inhibit its DNA binding, transactivation, and transforming activities.</title>
        <authorList>
            <person name="Kataoka K."/>
            <person name="Yoshitomo-Nakagawa K."/>
            <person name="Shioda S."/>
            <person name="Nishizawa M."/>
        </authorList>
    </citation>
    <scope>INTERACTION WITH MAF</scope>
</reference>
<name>PAX6_CHICK</name>